<name>SYW_AERPE</name>
<organism>
    <name type="scientific">Aeropyrum pernix (strain ATCC 700893 / DSM 11879 / JCM 9820 / NBRC 100138 / K1)</name>
    <dbReference type="NCBI Taxonomy" id="272557"/>
    <lineage>
        <taxon>Archaea</taxon>
        <taxon>Thermoproteota</taxon>
        <taxon>Thermoprotei</taxon>
        <taxon>Desulfurococcales</taxon>
        <taxon>Desulfurococcaceae</taxon>
        <taxon>Aeropyrum</taxon>
    </lineage>
</organism>
<comment type="catalytic activity">
    <reaction evidence="1">
        <text>tRNA(Trp) + L-tryptophan + ATP = L-tryptophyl-tRNA(Trp) + AMP + diphosphate + H(+)</text>
        <dbReference type="Rhea" id="RHEA:24080"/>
        <dbReference type="Rhea" id="RHEA-COMP:9671"/>
        <dbReference type="Rhea" id="RHEA-COMP:9705"/>
        <dbReference type="ChEBI" id="CHEBI:15378"/>
        <dbReference type="ChEBI" id="CHEBI:30616"/>
        <dbReference type="ChEBI" id="CHEBI:33019"/>
        <dbReference type="ChEBI" id="CHEBI:57912"/>
        <dbReference type="ChEBI" id="CHEBI:78442"/>
        <dbReference type="ChEBI" id="CHEBI:78535"/>
        <dbReference type="ChEBI" id="CHEBI:456215"/>
        <dbReference type="EC" id="6.1.1.2"/>
    </reaction>
</comment>
<comment type="subcellular location">
    <subcellularLocation>
        <location evidence="1">Cytoplasm</location>
    </subcellularLocation>
</comment>
<comment type="similarity">
    <text evidence="1">Belongs to the class-I aminoacyl-tRNA synthetase family.</text>
</comment>
<feature type="chain" id="PRO_0000136718" description="Tryptophan--tRNA ligase">
    <location>
        <begin position="1"/>
        <end position="372"/>
    </location>
</feature>
<feature type="region of interest" description="Disordered" evidence="2">
    <location>
        <begin position="247"/>
        <end position="268"/>
    </location>
</feature>
<feature type="short sequence motif" description="'HIGH' region">
    <location>
        <begin position="79"/>
        <end position="87"/>
    </location>
</feature>
<feature type="short sequence motif" description="'KMSKS' region">
    <location>
        <begin position="256"/>
        <end position="260"/>
    </location>
</feature>
<feature type="compositionally biased region" description="Polar residues" evidence="2">
    <location>
        <begin position="257"/>
        <end position="267"/>
    </location>
</feature>
<feature type="turn" evidence="3">
    <location>
        <begin position="12"/>
        <end position="17"/>
    </location>
</feature>
<feature type="helix" evidence="3">
    <location>
        <begin position="18"/>
        <end position="22"/>
    </location>
</feature>
<feature type="turn" evidence="3">
    <location>
        <begin position="23"/>
        <end position="25"/>
    </location>
</feature>
<feature type="helix" evidence="3">
    <location>
        <begin position="29"/>
        <end position="32"/>
    </location>
</feature>
<feature type="helix" evidence="3">
    <location>
        <begin position="33"/>
        <end position="38"/>
    </location>
</feature>
<feature type="helix" evidence="3">
    <location>
        <begin position="45"/>
        <end position="48"/>
    </location>
</feature>
<feature type="strand" evidence="3">
    <location>
        <begin position="51"/>
        <end position="57"/>
    </location>
</feature>
<feature type="helix" evidence="3">
    <location>
        <begin position="58"/>
        <end position="66"/>
    </location>
</feature>
<feature type="strand" evidence="3">
    <location>
        <begin position="72"/>
        <end position="77"/>
    </location>
</feature>
<feature type="helix" evidence="3">
    <location>
        <begin position="85"/>
        <end position="99"/>
    </location>
</feature>
<feature type="strand" evidence="3">
    <location>
        <begin position="103"/>
        <end position="108"/>
    </location>
</feature>
<feature type="helix" evidence="3">
    <location>
        <begin position="110"/>
        <end position="115"/>
    </location>
</feature>
<feature type="helix" evidence="3">
    <location>
        <begin position="121"/>
        <end position="130"/>
    </location>
</feature>
<feature type="helix" evidence="3">
    <location>
        <begin position="133"/>
        <end position="139"/>
    </location>
</feature>
<feature type="turn" evidence="3">
    <location>
        <begin position="143"/>
        <end position="145"/>
    </location>
</feature>
<feature type="strand" evidence="3">
    <location>
        <begin position="147"/>
        <end position="150"/>
    </location>
</feature>
<feature type="helix" evidence="3">
    <location>
        <begin position="151"/>
        <end position="153"/>
    </location>
</feature>
<feature type="helix" evidence="3">
    <location>
        <begin position="156"/>
        <end position="165"/>
    </location>
</feature>
<feature type="helix" evidence="3">
    <location>
        <begin position="171"/>
        <end position="178"/>
    </location>
</feature>
<feature type="helix" evidence="3">
    <location>
        <begin position="183"/>
        <end position="197"/>
    </location>
</feature>
<feature type="helix" evidence="3">
    <location>
        <begin position="198"/>
        <end position="200"/>
    </location>
</feature>
<feature type="helix" evidence="3">
    <location>
        <begin position="202"/>
        <end position="204"/>
    </location>
</feature>
<feature type="strand" evidence="3">
    <location>
        <begin position="210"/>
        <end position="215"/>
    </location>
</feature>
<feature type="helix" evidence="3">
    <location>
        <begin position="216"/>
        <end position="218"/>
    </location>
</feature>
<feature type="helix" evidence="3">
    <location>
        <begin position="219"/>
        <end position="231"/>
    </location>
</feature>
<feature type="turn" evidence="3">
    <location>
        <begin position="232"/>
        <end position="235"/>
    </location>
</feature>
<feature type="strand" evidence="3">
    <location>
        <begin position="242"/>
        <end position="246"/>
    </location>
</feature>
<feature type="strand" evidence="3">
    <location>
        <begin position="254"/>
        <end position="256"/>
    </location>
</feature>
<feature type="helix" evidence="3">
    <location>
        <begin position="262"/>
        <end position="264"/>
    </location>
</feature>
<feature type="helix" evidence="3">
    <location>
        <begin position="272"/>
        <end position="280"/>
    </location>
</feature>
<feature type="helix" evidence="3">
    <location>
        <begin position="290"/>
        <end position="296"/>
    </location>
</feature>
<feature type="helix" evidence="3">
    <location>
        <begin position="300"/>
        <end position="302"/>
    </location>
</feature>
<feature type="helix" evidence="3">
    <location>
        <begin position="304"/>
        <end position="311"/>
    </location>
</feature>
<feature type="helix" evidence="3">
    <location>
        <begin position="317"/>
        <end position="328"/>
    </location>
</feature>
<feature type="helix" evidence="3">
    <location>
        <begin position="334"/>
        <end position="364"/>
    </location>
</feature>
<protein>
    <recommendedName>
        <fullName evidence="1">Tryptophan--tRNA ligase</fullName>
        <ecNumber evidence="1">6.1.1.2</ecNumber>
    </recommendedName>
    <alternativeName>
        <fullName evidence="1">Tryptophanyl-tRNA synthetase</fullName>
        <shortName evidence="1">TrpRS</shortName>
    </alternativeName>
</protein>
<gene>
    <name evidence="1" type="primary">trpS</name>
    <name type="ordered locus">APE_2461.1</name>
</gene>
<dbReference type="EC" id="6.1.1.2" evidence="1"/>
<dbReference type="EMBL" id="BA000002">
    <property type="protein sequence ID" value="BAA81476.2"/>
    <property type="molecule type" value="Genomic_DNA"/>
</dbReference>
<dbReference type="PIR" id="D72477">
    <property type="entry name" value="D72477"/>
</dbReference>
<dbReference type="RefSeq" id="WP_010867022.1">
    <property type="nucleotide sequence ID" value="NC_000854.2"/>
</dbReference>
<dbReference type="PDB" id="3A04">
    <property type="method" value="X-ray"/>
    <property type="resolution" value="1.97 A"/>
    <property type="chains" value="A=1-372"/>
</dbReference>
<dbReference type="PDB" id="3A05">
    <property type="method" value="X-ray"/>
    <property type="resolution" value="2.20 A"/>
    <property type="chains" value="A=1-372"/>
</dbReference>
<dbReference type="PDBsum" id="3A04"/>
<dbReference type="PDBsum" id="3A05"/>
<dbReference type="SMR" id="Q9Y924"/>
<dbReference type="STRING" id="272557.APE_2461.1"/>
<dbReference type="EnsemblBacteria" id="BAA81476">
    <property type="protein sequence ID" value="BAA81476"/>
    <property type="gene ID" value="APE_2461.1"/>
</dbReference>
<dbReference type="GeneID" id="1445433"/>
<dbReference type="KEGG" id="ape:APE_2461.1"/>
<dbReference type="PATRIC" id="fig|272557.25.peg.1635"/>
<dbReference type="eggNOG" id="arCOG01887">
    <property type="taxonomic scope" value="Archaea"/>
</dbReference>
<dbReference type="BRENDA" id="6.1.1.2">
    <property type="organism ID" value="171"/>
</dbReference>
<dbReference type="EvolutionaryTrace" id="Q9Y924"/>
<dbReference type="Proteomes" id="UP000002518">
    <property type="component" value="Chromosome"/>
</dbReference>
<dbReference type="GO" id="GO:0005737">
    <property type="term" value="C:cytoplasm"/>
    <property type="evidence" value="ECO:0007669"/>
    <property type="project" value="UniProtKB-SubCell"/>
</dbReference>
<dbReference type="GO" id="GO:0005524">
    <property type="term" value="F:ATP binding"/>
    <property type="evidence" value="ECO:0007669"/>
    <property type="project" value="UniProtKB-UniRule"/>
</dbReference>
<dbReference type="GO" id="GO:0004830">
    <property type="term" value="F:tryptophan-tRNA ligase activity"/>
    <property type="evidence" value="ECO:0007669"/>
    <property type="project" value="UniProtKB-UniRule"/>
</dbReference>
<dbReference type="GO" id="GO:0006436">
    <property type="term" value="P:tryptophanyl-tRNA aminoacylation"/>
    <property type="evidence" value="ECO:0007669"/>
    <property type="project" value="UniProtKB-UniRule"/>
</dbReference>
<dbReference type="FunFam" id="3.40.50.620:FF:000207">
    <property type="entry name" value="Tryptophan--tRNA ligase"/>
    <property type="match status" value="1"/>
</dbReference>
<dbReference type="Gene3D" id="3.40.50.620">
    <property type="entry name" value="HUPs"/>
    <property type="match status" value="1"/>
</dbReference>
<dbReference type="Gene3D" id="1.10.240.10">
    <property type="entry name" value="Tyrosyl-Transfer RNA Synthetase"/>
    <property type="match status" value="1"/>
</dbReference>
<dbReference type="HAMAP" id="MF_00140_A">
    <property type="entry name" value="Trp_tRNA_synth_A"/>
    <property type="match status" value="1"/>
</dbReference>
<dbReference type="InterPro" id="IPR002305">
    <property type="entry name" value="aa-tRNA-synth_Ic"/>
</dbReference>
<dbReference type="InterPro" id="IPR014729">
    <property type="entry name" value="Rossmann-like_a/b/a_fold"/>
</dbReference>
<dbReference type="InterPro" id="IPR002306">
    <property type="entry name" value="Trp-tRNA-ligase"/>
</dbReference>
<dbReference type="InterPro" id="IPR020653">
    <property type="entry name" value="Tryptophan-tRNA-ligase_arc"/>
</dbReference>
<dbReference type="NCBIfam" id="NF008925">
    <property type="entry name" value="PRK12285.1-2"/>
    <property type="match status" value="1"/>
</dbReference>
<dbReference type="NCBIfam" id="TIGR00233">
    <property type="entry name" value="trpS"/>
    <property type="match status" value="1"/>
</dbReference>
<dbReference type="PANTHER" id="PTHR10055:SF5">
    <property type="entry name" value="TRYPTOPHAN--TRNA LIGASE"/>
    <property type="match status" value="1"/>
</dbReference>
<dbReference type="PANTHER" id="PTHR10055">
    <property type="entry name" value="TRYPTOPHANYL-TRNA SYNTHETASE"/>
    <property type="match status" value="1"/>
</dbReference>
<dbReference type="Pfam" id="PF00579">
    <property type="entry name" value="tRNA-synt_1b"/>
    <property type="match status" value="1"/>
</dbReference>
<dbReference type="PRINTS" id="PR01039">
    <property type="entry name" value="TRNASYNTHTRP"/>
</dbReference>
<dbReference type="SUPFAM" id="SSF52374">
    <property type="entry name" value="Nucleotidylyl transferase"/>
    <property type="match status" value="1"/>
</dbReference>
<sequence length="372" mass="42154">MAAERLDPWGAVEIKDYDRLLRTFGIRPFSEVLPLLRKAGMEPSFLMRRGIIFGHRDFDKILEAKARGERVAVLTGFMPSGKFHFGHKLTVDQLIYLQKNGFKVFVAIADAEAFAVRRIGREEAVRIAVEEYIANMIALGLDPKDTEFYFQTNRGTPYFRLIQLFSGKVTAAEMEAIYGELTPAKMMASLTQAADILHVQLDEYGGYRHVVVPVGADQDPHLRLTRDLADRMAGVVELERPASTYHKLQPGLDGRKMSSSRPDSTIFLTDPPEVARNKLFRALTGGRATAEEQRRLGGVPEVCSVYHMDLYHLMPDDGEVKHIYTSCRLGKILCGECKQIAWEKLERFLAEHQSRLEKAKTIAWKLVEPPRF</sequence>
<reference key="1">
    <citation type="journal article" date="1999" name="DNA Res.">
        <title>Complete genome sequence of an aerobic hyper-thermophilic crenarchaeon, Aeropyrum pernix K1.</title>
        <authorList>
            <person name="Kawarabayasi Y."/>
            <person name="Hino Y."/>
            <person name="Horikawa H."/>
            <person name="Yamazaki S."/>
            <person name="Haikawa Y."/>
            <person name="Jin-no K."/>
            <person name="Takahashi M."/>
            <person name="Sekine M."/>
            <person name="Baba S."/>
            <person name="Ankai A."/>
            <person name="Kosugi H."/>
            <person name="Hosoyama A."/>
            <person name="Fukui S."/>
            <person name="Nagai Y."/>
            <person name="Nishijima K."/>
            <person name="Nakazawa H."/>
            <person name="Takamiya M."/>
            <person name="Masuda S."/>
            <person name="Funahashi T."/>
            <person name="Tanaka T."/>
            <person name="Kudoh Y."/>
            <person name="Yamazaki J."/>
            <person name="Kushida N."/>
            <person name="Oguchi A."/>
            <person name="Aoki K."/>
            <person name="Kubota K."/>
            <person name="Nakamura Y."/>
            <person name="Nomura N."/>
            <person name="Sako Y."/>
            <person name="Kikuchi H."/>
        </authorList>
    </citation>
    <scope>NUCLEOTIDE SEQUENCE [LARGE SCALE GENOMIC DNA]</scope>
    <source>
        <strain>ATCC 700893 / DSM 11879 / JCM 9820 / NBRC 100138 / K1</strain>
    </source>
</reference>
<proteinExistence type="evidence at protein level"/>
<accession>Q9Y924</accession>
<evidence type="ECO:0000255" key="1">
    <source>
        <dbReference type="HAMAP-Rule" id="MF_00140"/>
    </source>
</evidence>
<evidence type="ECO:0000256" key="2">
    <source>
        <dbReference type="SAM" id="MobiDB-lite"/>
    </source>
</evidence>
<evidence type="ECO:0007829" key="3">
    <source>
        <dbReference type="PDB" id="3A04"/>
    </source>
</evidence>
<keyword id="KW-0002">3D-structure</keyword>
<keyword id="KW-0030">Aminoacyl-tRNA synthetase</keyword>
<keyword id="KW-0067">ATP-binding</keyword>
<keyword id="KW-0963">Cytoplasm</keyword>
<keyword id="KW-0436">Ligase</keyword>
<keyword id="KW-0547">Nucleotide-binding</keyword>
<keyword id="KW-0648">Protein biosynthesis</keyword>
<keyword id="KW-1185">Reference proteome</keyword>